<reference key="1">
    <citation type="journal article" date="2009" name="Science">
        <title>The dynamics and time scale of ongoing genomic erosion in symbiotic bacteria.</title>
        <authorList>
            <person name="Moran N.A."/>
            <person name="McLaughlin H.J."/>
            <person name="Sorek R."/>
        </authorList>
    </citation>
    <scope>NUCLEOTIDE SEQUENCE [LARGE SCALE GENOMIC DNA]</scope>
    <source>
        <strain>5A</strain>
    </source>
</reference>
<feature type="chain" id="PRO_1000196350" description="Small ribosomal subunit protein bS16">
    <location>
        <begin position="1"/>
        <end position="79"/>
    </location>
</feature>
<gene>
    <name evidence="1" type="primary">rpsP</name>
    <name type="ordered locus">BUAP5A_387</name>
</gene>
<comment type="similarity">
    <text evidence="1">Belongs to the bacterial ribosomal protein bS16 family.</text>
</comment>
<evidence type="ECO:0000255" key="1">
    <source>
        <dbReference type="HAMAP-Rule" id="MF_00385"/>
    </source>
</evidence>
<evidence type="ECO:0000305" key="2"/>
<accession>B8D9H7</accession>
<name>RS16_BUCA5</name>
<keyword id="KW-0687">Ribonucleoprotein</keyword>
<keyword id="KW-0689">Ribosomal protein</keyword>
<sequence>MVKIRLARYGTKKRPFYKLVVADSRFSRNGRFIERLGYFNPIAKGKSEILKLNLERIEHWTNQGAQMSERTKKLIKQKR</sequence>
<dbReference type="EMBL" id="CP001161">
    <property type="protein sequence ID" value="ACL30748.1"/>
    <property type="molecule type" value="Genomic_DNA"/>
</dbReference>
<dbReference type="RefSeq" id="WP_009874351.1">
    <property type="nucleotide sequence ID" value="NC_011833.1"/>
</dbReference>
<dbReference type="SMR" id="B8D9H7"/>
<dbReference type="KEGG" id="bap:BUAP5A_387"/>
<dbReference type="HOGENOM" id="CLU_100590_5_1_6"/>
<dbReference type="OrthoDB" id="9807878at2"/>
<dbReference type="Proteomes" id="UP000006904">
    <property type="component" value="Chromosome"/>
</dbReference>
<dbReference type="GO" id="GO:0005737">
    <property type="term" value="C:cytoplasm"/>
    <property type="evidence" value="ECO:0007669"/>
    <property type="project" value="UniProtKB-ARBA"/>
</dbReference>
<dbReference type="GO" id="GO:0015935">
    <property type="term" value="C:small ribosomal subunit"/>
    <property type="evidence" value="ECO:0007669"/>
    <property type="project" value="TreeGrafter"/>
</dbReference>
<dbReference type="GO" id="GO:0003735">
    <property type="term" value="F:structural constituent of ribosome"/>
    <property type="evidence" value="ECO:0007669"/>
    <property type="project" value="InterPro"/>
</dbReference>
<dbReference type="GO" id="GO:0006412">
    <property type="term" value="P:translation"/>
    <property type="evidence" value="ECO:0007669"/>
    <property type="project" value="UniProtKB-UniRule"/>
</dbReference>
<dbReference type="Gene3D" id="3.30.1320.10">
    <property type="match status" value="1"/>
</dbReference>
<dbReference type="HAMAP" id="MF_00385">
    <property type="entry name" value="Ribosomal_bS16"/>
    <property type="match status" value="1"/>
</dbReference>
<dbReference type="InterPro" id="IPR000307">
    <property type="entry name" value="Ribosomal_bS16"/>
</dbReference>
<dbReference type="InterPro" id="IPR023803">
    <property type="entry name" value="Ribosomal_bS16_dom_sf"/>
</dbReference>
<dbReference type="NCBIfam" id="TIGR00002">
    <property type="entry name" value="S16"/>
    <property type="match status" value="1"/>
</dbReference>
<dbReference type="PANTHER" id="PTHR12919">
    <property type="entry name" value="30S RIBOSOMAL PROTEIN S16"/>
    <property type="match status" value="1"/>
</dbReference>
<dbReference type="PANTHER" id="PTHR12919:SF20">
    <property type="entry name" value="SMALL RIBOSOMAL SUBUNIT PROTEIN BS16M"/>
    <property type="match status" value="1"/>
</dbReference>
<dbReference type="Pfam" id="PF00886">
    <property type="entry name" value="Ribosomal_S16"/>
    <property type="match status" value="1"/>
</dbReference>
<dbReference type="SUPFAM" id="SSF54565">
    <property type="entry name" value="Ribosomal protein S16"/>
    <property type="match status" value="1"/>
</dbReference>
<organism>
    <name type="scientific">Buchnera aphidicola subsp. Acyrthosiphon pisum (strain 5A)</name>
    <dbReference type="NCBI Taxonomy" id="563178"/>
    <lineage>
        <taxon>Bacteria</taxon>
        <taxon>Pseudomonadati</taxon>
        <taxon>Pseudomonadota</taxon>
        <taxon>Gammaproteobacteria</taxon>
        <taxon>Enterobacterales</taxon>
        <taxon>Erwiniaceae</taxon>
        <taxon>Buchnera</taxon>
    </lineage>
</organism>
<protein>
    <recommendedName>
        <fullName evidence="1">Small ribosomal subunit protein bS16</fullName>
    </recommendedName>
    <alternativeName>
        <fullName evidence="2">30S ribosomal protein S16</fullName>
    </alternativeName>
</protein>
<proteinExistence type="inferred from homology"/>